<keyword id="KW-1185">Reference proteome</keyword>
<keyword id="KW-0687">Ribonucleoprotein</keyword>
<keyword id="KW-0689">Ribosomal protein</keyword>
<keyword id="KW-0694">RNA-binding</keyword>
<keyword id="KW-0699">rRNA-binding</keyword>
<comment type="function">
    <text evidence="1">One of the primary rRNA binding proteins. Required for association of the 30S and 50S subunits to form the 70S ribosome, for tRNA binding and peptide bond formation. It has been suggested to have peptidyltransferase activity; this is somewhat controversial. Makes several contacts with the 16S rRNA in the 70S ribosome.</text>
</comment>
<comment type="subunit">
    <text evidence="1">Part of the 50S ribosomal subunit. Forms a bridge to the 30S subunit in the 70S ribosome.</text>
</comment>
<comment type="similarity">
    <text evidence="1">Belongs to the universal ribosomal protein uL2 family.</text>
</comment>
<evidence type="ECO:0000255" key="1">
    <source>
        <dbReference type="HAMAP-Rule" id="MF_01320"/>
    </source>
</evidence>
<evidence type="ECO:0000256" key="2">
    <source>
        <dbReference type="SAM" id="MobiDB-lite"/>
    </source>
</evidence>
<evidence type="ECO:0000305" key="3"/>
<gene>
    <name evidence="1" type="primary">rplB</name>
    <name type="ordered locus">Amuc_0301</name>
</gene>
<feature type="chain" id="PRO_1000141497" description="Large ribosomal subunit protein uL2">
    <location>
        <begin position="1"/>
        <end position="278"/>
    </location>
</feature>
<feature type="region of interest" description="Disordered" evidence="2">
    <location>
        <begin position="32"/>
        <end position="54"/>
    </location>
</feature>
<feature type="region of interest" description="Disordered" evidence="2">
    <location>
        <begin position="221"/>
        <end position="278"/>
    </location>
</feature>
<feature type="compositionally biased region" description="Gly residues" evidence="2">
    <location>
        <begin position="232"/>
        <end position="245"/>
    </location>
</feature>
<dbReference type="EMBL" id="CP001071">
    <property type="protein sequence ID" value="ACD04143.1"/>
    <property type="molecule type" value="Genomic_DNA"/>
</dbReference>
<dbReference type="RefSeq" id="WP_012419358.1">
    <property type="nucleotide sequence ID" value="NZ_CP071807.1"/>
</dbReference>
<dbReference type="SMR" id="B2UMT7"/>
<dbReference type="STRING" id="349741.Amuc_0301"/>
<dbReference type="PaxDb" id="349741-Amuc_0301"/>
<dbReference type="GeneID" id="86959779"/>
<dbReference type="KEGG" id="amu:Amuc_0301"/>
<dbReference type="eggNOG" id="COG0090">
    <property type="taxonomic scope" value="Bacteria"/>
</dbReference>
<dbReference type="HOGENOM" id="CLU_036235_2_1_0"/>
<dbReference type="OrthoDB" id="9778722at2"/>
<dbReference type="BioCyc" id="AMUC349741:G1GBX-343-MONOMER"/>
<dbReference type="Proteomes" id="UP000001031">
    <property type="component" value="Chromosome"/>
</dbReference>
<dbReference type="GO" id="GO:0015934">
    <property type="term" value="C:large ribosomal subunit"/>
    <property type="evidence" value="ECO:0007669"/>
    <property type="project" value="InterPro"/>
</dbReference>
<dbReference type="GO" id="GO:0019843">
    <property type="term" value="F:rRNA binding"/>
    <property type="evidence" value="ECO:0007669"/>
    <property type="project" value="UniProtKB-UniRule"/>
</dbReference>
<dbReference type="GO" id="GO:0003735">
    <property type="term" value="F:structural constituent of ribosome"/>
    <property type="evidence" value="ECO:0007669"/>
    <property type="project" value="InterPro"/>
</dbReference>
<dbReference type="GO" id="GO:0016740">
    <property type="term" value="F:transferase activity"/>
    <property type="evidence" value="ECO:0007669"/>
    <property type="project" value="InterPro"/>
</dbReference>
<dbReference type="GO" id="GO:0002181">
    <property type="term" value="P:cytoplasmic translation"/>
    <property type="evidence" value="ECO:0007669"/>
    <property type="project" value="TreeGrafter"/>
</dbReference>
<dbReference type="FunFam" id="2.30.30.30:FF:000001">
    <property type="entry name" value="50S ribosomal protein L2"/>
    <property type="match status" value="1"/>
</dbReference>
<dbReference type="FunFam" id="2.40.50.140:FF:000003">
    <property type="entry name" value="50S ribosomal protein L2"/>
    <property type="match status" value="1"/>
</dbReference>
<dbReference type="FunFam" id="4.10.950.10:FF:000001">
    <property type="entry name" value="50S ribosomal protein L2"/>
    <property type="match status" value="1"/>
</dbReference>
<dbReference type="Gene3D" id="2.30.30.30">
    <property type="match status" value="1"/>
</dbReference>
<dbReference type="Gene3D" id="2.40.50.140">
    <property type="entry name" value="Nucleic acid-binding proteins"/>
    <property type="match status" value="1"/>
</dbReference>
<dbReference type="Gene3D" id="4.10.950.10">
    <property type="entry name" value="Ribosomal protein L2, domain 3"/>
    <property type="match status" value="1"/>
</dbReference>
<dbReference type="HAMAP" id="MF_01320_B">
    <property type="entry name" value="Ribosomal_uL2_B"/>
    <property type="match status" value="1"/>
</dbReference>
<dbReference type="InterPro" id="IPR012340">
    <property type="entry name" value="NA-bd_OB-fold"/>
</dbReference>
<dbReference type="InterPro" id="IPR014722">
    <property type="entry name" value="Rib_uL2_dom2"/>
</dbReference>
<dbReference type="InterPro" id="IPR002171">
    <property type="entry name" value="Ribosomal_uL2"/>
</dbReference>
<dbReference type="InterPro" id="IPR005880">
    <property type="entry name" value="Ribosomal_uL2_bac/org-type"/>
</dbReference>
<dbReference type="InterPro" id="IPR022669">
    <property type="entry name" value="Ribosomal_uL2_C"/>
</dbReference>
<dbReference type="InterPro" id="IPR014726">
    <property type="entry name" value="Ribosomal_uL2_dom3"/>
</dbReference>
<dbReference type="InterPro" id="IPR022666">
    <property type="entry name" value="Ribosomal_uL2_RNA-bd_dom"/>
</dbReference>
<dbReference type="InterPro" id="IPR008991">
    <property type="entry name" value="Translation_prot_SH3-like_sf"/>
</dbReference>
<dbReference type="NCBIfam" id="TIGR01171">
    <property type="entry name" value="rplB_bact"/>
    <property type="match status" value="1"/>
</dbReference>
<dbReference type="PANTHER" id="PTHR13691:SF5">
    <property type="entry name" value="LARGE RIBOSOMAL SUBUNIT PROTEIN UL2M"/>
    <property type="match status" value="1"/>
</dbReference>
<dbReference type="PANTHER" id="PTHR13691">
    <property type="entry name" value="RIBOSOMAL PROTEIN L2"/>
    <property type="match status" value="1"/>
</dbReference>
<dbReference type="Pfam" id="PF00181">
    <property type="entry name" value="Ribosomal_L2"/>
    <property type="match status" value="1"/>
</dbReference>
<dbReference type="Pfam" id="PF03947">
    <property type="entry name" value="Ribosomal_L2_C"/>
    <property type="match status" value="1"/>
</dbReference>
<dbReference type="PIRSF" id="PIRSF002158">
    <property type="entry name" value="Ribosomal_L2"/>
    <property type="match status" value="1"/>
</dbReference>
<dbReference type="SMART" id="SM01383">
    <property type="entry name" value="Ribosomal_L2"/>
    <property type="match status" value="1"/>
</dbReference>
<dbReference type="SMART" id="SM01382">
    <property type="entry name" value="Ribosomal_L2_C"/>
    <property type="match status" value="1"/>
</dbReference>
<dbReference type="SUPFAM" id="SSF50249">
    <property type="entry name" value="Nucleic acid-binding proteins"/>
    <property type="match status" value="1"/>
</dbReference>
<dbReference type="SUPFAM" id="SSF50104">
    <property type="entry name" value="Translation proteins SH3-like domain"/>
    <property type="match status" value="1"/>
</dbReference>
<accession>B2UMT7</accession>
<name>RL2_AKKM8</name>
<organism>
    <name type="scientific">Akkermansia muciniphila (strain ATCC BAA-835 / DSM 22959 / JCM 33894 / BCRC 81048 / CCUG 64013 / CIP 107961 / Muc)</name>
    <dbReference type="NCBI Taxonomy" id="349741"/>
    <lineage>
        <taxon>Bacteria</taxon>
        <taxon>Pseudomonadati</taxon>
        <taxon>Verrucomicrobiota</taxon>
        <taxon>Verrucomicrobiia</taxon>
        <taxon>Verrucomicrobiales</taxon>
        <taxon>Akkermansiaceae</taxon>
        <taxon>Akkermansia</taxon>
    </lineage>
</organism>
<protein>
    <recommendedName>
        <fullName evidence="1">Large ribosomal subunit protein uL2</fullName>
    </recommendedName>
    <alternativeName>
        <fullName evidence="3">50S ribosomal protein L2</fullName>
    </alternativeName>
</protein>
<reference key="1">
    <citation type="journal article" date="2011" name="PLoS ONE">
        <title>The genome of Akkermansia muciniphila, a dedicated intestinal mucin degrader, and its use in exploring intestinal metagenomes.</title>
        <authorList>
            <person name="van Passel M.W."/>
            <person name="Kant R."/>
            <person name="Zoetendal E.G."/>
            <person name="Plugge C.M."/>
            <person name="Derrien M."/>
            <person name="Malfatti S.A."/>
            <person name="Chain P.S."/>
            <person name="Woyke T."/>
            <person name="Palva A."/>
            <person name="de Vos W.M."/>
            <person name="Smidt H."/>
        </authorList>
    </citation>
    <scope>NUCLEOTIDE SEQUENCE [LARGE SCALE GENOMIC DNA]</scope>
    <source>
        <strain>ATCC BAA-835 / DSM 22959 / JCM 33894 / BCRC 81048 / CCUG 64013 / CIP 107961 / Muc</strain>
    </source>
</reference>
<sequence length="278" mass="30660">MSLKSFKPVTPSNRYKVWPSFDEITTSTPEKSLCRPLKKSGGRNNNGRITTRHIGGGHKRKYRLVDFKRNKFDVPATVLTIEYDPNRTCRIALIEYKDGEKSYILAPTGLQVGMKVESGQKVAPKVGNAMPLKNVPLGTSVHNIEIRPGSGGKVARAAGQQAIVSNREAGYALIKMPSGEIRRFNEDCYCTIGQVGNTQHMNEMSGKAGRTRWMGVRPTVRGMTMNPVDHPNGGGEGKSKSGGGRQHLKSPWGHVKGQKTRRLRKPSDSVIVQRRNAK</sequence>
<proteinExistence type="inferred from homology"/>